<gene>
    <name evidence="1" type="primary">hisD</name>
    <name type="ordered locus">PFL_0929</name>
</gene>
<organism>
    <name type="scientific">Pseudomonas fluorescens (strain ATCC BAA-477 / NRRL B-23932 / Pf-5)</name>
    <dbReference type="NCBI Taxonomy" id="220664"/>
    <lineage>
        <taxon>Bacteria</taxon>
        <taxon>Pseudomonadati</taxon>
        <taxon>Pseudomonadota</taxon>
        <taxon>Gammaproteobacteria</taxon>
        <taxon>Pseudomonadales</taxon>
        <taxon>Pseudomonadaceae</taxon>
        <taxon>Pseudomonas</taxon>
    </lineage>
</organism>
<sequence>MTAPTAIRRLNAADPDFARHLDHLLSWESVSDDSVNQRVLDIIKAVRERGDAALVEFTQRFDGLQVASMADLILPRERLELALTRITVAQREALEKAAARVRSYHEKQKQDSWTYTEADGTVLGQKVTPLDRAGLYVPGGKASYPSSVLMNAIPAKVAGVTEVVMVVPTPRGEVNELVLAAACIAGVDRVFTIGGAQAVAALAYGTESVPQVDKVVGPGNIYVATAKRHVFGQVGIDMIAGPSEILVVCDGQTDPDWIAMDLFSQAEHDEDAQAILVSPDAEFLDKVAASIAKLLPTMERAEIINTSINGRGALIKVRDMQQAIEVANRIAPEHLELSVADPQAWLPQIRHAGAIFMGRHTSEALGDYCAGPNHVLPTSGTARFSSPLGVYDFQKRSSIIFCSEQGASELGRTASVLARGESLTAHARSAEYRIVDDQDQGQ</sequence>
<protein>
    <recommendedName>
        <fullName evidence="1">Histidinol dehydrogenase</fullName>
        <shortName evidence="1">HDH</shortName>
        <ecNumber evidence="1">1.1.1.23</ecNumber>
    </recommendedName>
</protein>
<keyword id="KW-0028">Amino-acid biosynthesis</keyword>
<keyword id="KW-0368">Histidine biosynthesis</keyword>
<keyword id="KW-0479">Metal-binding</keyword>
<keyword id="KW-0520">NAD</keyword>
<keyword id="KW-0560">Oxidoreductase</keyword>
<keyword id="KW-0862">Zinc</keyword>
<reference key="1">
    <citation type="journal article" date="2005" name="Nat. Biotechnol.">
        <title>Complete genome sequence of the plant commensal Pseudomonas fluorescens Pf-5.</title>
        <authorList>
            <person name="Paulsen I.T."/>
            <person name="Press C.M."/>
            <person name="Ravel J."/>
            <person name="Kobayashi D.Y."/>
            <person name="Myers G.S.A."/>
            <person name="Mavrodi D.V."/>
            <person name="DeBoy R.T."/>
            <person name="Seshadri R."/>
            <person name="Ren Q."/>
            <person name="Madupu R."/>
            <person name="Dodson R.J."/>
            <person name="Durkin A.S."/>
            <person name="Brinkac L.M."/>
            <person name="Daugherty S.C."/>
            <person name="Sullivan S.A."/>
            <person name="Rosovitz M.J."/>
            <person name="Gwinn M.L."/>
            <person name="Zhou L."/>
            <person name="Schneider D.J."/>
            <person name="Cartinhour S.W."/>
            <person name="Nelson W.C."/>
            <person name="Weidman J."/>
            <person name="Watkins K."/>
            <person name="Tran K."/>
            <person name="Khouri H."/>
            <person name="Pierson E.A."/>
            <person name="Pierson L.S. III"/>
            <person name="Thomashow L.S."/>
            <person name="Loper J.E."/>
        </authorList>
    </citation>
    <scope>NUCLEOTIDE SEQUENCE [LARGE SCALE GENOMIC DNA]</scope>
    <source>
        <strain>ATCC BAA-477 / NRRL B-23932 / Pf-5</strain>
    </source>
</reference>
<comment type="function">
    <text evidence="1">Catalyzes the sequential NAD-dependent oxidations of L-histidinol to L-histidinaldehyde and then to L-histidine.</text>
</comment>
<comment type="catalytic activity">
    <reaction evidence="1">
        <text>L-histidinol + 2 NAD(+) + H2O = L-histidine + 2 NADH + 3 H(+)</text>
        <dbReference type="Rhea" id="RHEA:20641"/>
        <dbReference type="ChEBI" id="CHEBI:15377"/>
        <dbReference type="ChEBI" id="CHEBI:15378"/>
        <dbReference type="ChEBI" id="CHEBI:57540"/>
        <dbReference type="ChEBI" id="CHEBI:57595"/>
        <dbReference type="ChEBI" id="CHEBI:57699"/>
        <dbReference type="ChEBI" id="CHEBI:57945"/>
        <dbReference type="EC" id="1.1.1.23"/>
    </reaction>
</comment>
<comment type="cofactor">
    <cofactor evidence="1">
        <name>Zn(2+)</name>
        <dbReference type="ChEBI" id="CHEBI:29105"/>
    </cofactor>
    <text evidence="1">Binds 1 zinc ion per subunit.</text>
</comment>
<comment type="pathway">
    <text evidence="1">Amino-acid biosynthesis; L-histidine biosynthesis; L-histidine from 5-phospho-alpha-D-ribose 1-diphosphate: step 9/9.</text>
</comment>
<comment type="similarity">
    <text evidence="1">Belongs to the histidinol dehydrogenase family.</text>
</comment>
<accession>Q4KI73</accession>
<feature type="chain" id="PRO_0000135820" description="Histidinol dehydrogenase">
    <location>
        <begin position="1"/>
        <end position="442"/>
    </location>
</feature>
<feature type="active site" description="Proton acceptor" evidence="1">
    <location>
        <position position="333"/>
    </location>
</feature>
<feature type="active site" description="Proton acceptor" evidence="1">
    <location>
        <position position="334"/>
    </location>
</feature>
<feature type="binding site" evidence="1">
    <location>
        <position position="136"/>
    </location>
    <ligand>
        <name>NAD(+)</name>
        <dbReference type="ChEBI" id="CHEBI:57540"/>
    </ligand>
</feature>
<feature type="binding site" evidence="1">
    <location>
        <position position="197"/>
    </location>
    <ligand>
        <name>NAD(+)</name>
        <dbReference type="ChEBI" id="CHEBI:57540"/>
    </ligand>
</feature>
<feature type="binding site" evidence="1">
    <location>
        <position position="220"/>
    </location>
    <ligand>
        <name>NAD(+)</name>
        <dbReference type="ChEBI" id="CHEBI:57540"/>
    </ligand>
</feature>
<feature type="binding site" evidence="1">
    <location>
        <position position="243"/>
    </location>
    <ligand>
        <name>substrate</name>
    </ligand>
</feature>
<feature type="binding site" evidence="1">
    <location>
        <position position="265"/>
    </location>
    <ligand>
        <name>substrate</name>
    </ligand>
</feature>
<feature type="binding site" evidence="1">
    <location>
        <position position="265"/>
    </location>
    <ligand>
        <name>Zn(2+)</name>
        <dbReference type="ChEBI" id="CHEBI:29105"/>
    </ligand>
</feature>
<feature type="binding site" evidence="1">
    <location>
        <position position="268"/>
    </location>
    <ligand>
        <name>substrate</name>
    </ligand>
</feature>
<feature type="binding site" evidence="1">
    <location>
        <position position="268"/>
    </location>
    <ligand>
        <name>Zn(2+)</name>
        <dbReference type="ChEBI" id="CHEBI:29105"/>
    </ligand>
</feature>
<feature type="binding site" evidence="1">
    <location>
        <position position="334"/>
    </location>
    <ligand>
        <name>substrate</name>
    </ligand>
</feature>
<feature type="binding site" evidence="1">
    <location>
        <position position="367"/>
    </location>
    <ligand>
        <name>substrate</name>
    </ligand>
</feature>
<feature type="binding site" evidence="1">
    <location>
        <position position="367"/>
    </location>
    <ligand>
        <name>Zn(2+)</name>
        <dbReference type="ChEBI" id="CHEBI:29105"/>
    </ligand>
</feature>
<feature type="binding site" evidence="1">
    <location>
        <position position="421"/>
    </location>
    <ligand>
        <name>substrate</name>
    </ligand>
</feature>
<feature type="binding site" evidence="1">
    <location>
        <position position="426"/>
    </location>
    <ligand>
        <name>substrate</name>
    </ligand>
</feature>
<feature type="binding site" evidence="1">
    <location>
        <position position="426"/>
    </location>
    <ligand>
        <name>Zn(2+)</name>
        <dbReference type="ChEBI" id="CHEBI:29105"/>
    </ligand>
</feature>
<evidence type="ECO:0000255" key="1">
    <source>
        <dbReference type="HAMAP-Rule" id="MF_01024"/>
    </source>
</evidence>
<name>HISX_PSEF5</name>
<dbReference type="EC" id="1.1.1.23" evidence="1"/>
<dbReference type="EMBL" id="CP000076">
    <property type="protein sequence ID" value="AAY90216.2"/>
    <property type="molecule type" value="Genomic_DNA"/>
</dbReference>
<dbReference type="RefSeq" id="WP_011059283.1">
    <property type="nucleotide sequence ID" value="NC_004129.6"/>
</dbReference>
<dbReference type="SMR" id="Q4KI73"/>
<dbReference type="STRING" id="220664.PFL_0929"/>
<dbReference type="KEGG" id="pfl:PFL_0929"/>
<dbReference type="PATRIC" id="fig|220664.5.peg.952"/>
<dbReference type="eggNOG" id="COG0141">
    <property type="taxonomic scope" value="Bacteria"/>
</dbReference>
<dbReference type="HOGENOM" id="CLU_006732_3_3_6"/>
<dbReference type="UniPathway" id="UPA00031">
    <property type="reaction ID" value="UER00014"/>
</dbReference>
<dbReference type="Proteomes" id="UP000008540">
    <property type="component" value="Chromosome"/>
</dbReference>
<dbReference type="GO" id="GO:0005829">
    <property type="term" value="C:cytosol"/>
    <property type="evidence" value="ECO:0007669"/>
    <property type="project" value="TreeGrafter"/>
</dbReference>
<dbReference type="GO" id="GO:0004399">
    <property type="term" value="F:histidinol dehydrogenase activity"/>
    <property type="evidence" value="ECO:0007669"/>
    <property type="project" value="UniProtKB-UniRule"/>
</dbReference>
<dbReference type="GO" id="GO:0051287">
    <property type="term" value="F:NAD binding"/>
    <property type="evidence" value="ECO:0007669"/>
    <property type="project" value="InterPro"/>
</dbReference>
<dbReference type="GO" id="GO:0008270">
    <property type="term" value="F:zinc ion binding"/>
    <property type="evidence" value="ECO:0007669"/>
    <property type="project" value="UniProtKB-UniRule"/>
</dbReference>
<dbReference type="GO" id="GO:0000105">
    <property type="term" value="P:L-histidine biosynthetic process"/>
    <property type="evidence" value="ECO:0007669"/>
    <property type="project" value="UniProtKB-UniRule"/>
</dbReference>
<dbReference type="CDD" id="cd06572">
    <property type="entry name" value="Histidinol_dh"/>
    <property type="match status" value="1"/>
</dbReference>
<dbReference type="FunFam" id="3.40.50.1980:FF:000004">
    <property type="entry name" value="Histidinol dehydrogenase"/>
    <property type="match status" value="1"/>
</dbReference>
<dbReference type="FunFam" id="3.40.50.1980:FF:000010">
    <property type="entry name" value="Histidinol dehydrogenase"/>
    <property type="match status" value="1"/>
</dbReference>
<dbReference type="FunFam" id="1.20.5.1300:FF:000002">
    <property type="entry name" value="Histidinol dehydrogenase, chloroplastic"/>
    <property type="match status" value="1"/>
</dbReference>
<dbReference type="Gene3D" id="1.20.5.1300">
    <property type="match status" value="1"/>
</dbReference>
<dbReference type="Gene3D" id="3.40.50.1980">
    <property type="entry name" value="Nitrogenase molybdenum iron protein domain"/>
    <property type="match status" value="2"/>
</dbReference>
<dbReference type="HAMAP" id="MF_01024">
    <property type="entry name" value="HisD"/>
    <property type="match status" value="1"/>
</dbReference>
<dbReference type="InterPro" id="IPR016161">
    <property type="entry name" value="Ald_DH/histidinol_DH"/>
</dbReference>
<dbReference type="InterPro" id="IPR001692">
    <property type="entry name" value="Histidinol_DH_CS"/>
</dbReference>
<dbReference type="InterPro" id="IPR022695">
    <property type="entry name" value="Histidinol_DH_monofunct"/>
</dbReference>
<dbReference type="InterPro" id="IPR012131">
    <property type="entry name" value="Hstdl_DH"/>
</dbReference>
<dbReference type="NCBIfam" id="TIGR00069">
    <property type="entry name" value="hisD"/>
    <property type="match status" value="1"/>
</dbReference>
<dbReference type="PANTHER" id="PTHR21256:SF2">
    <property type="entry name" value="HISTIDINE BIOSYNTHESIS TRIFUNCTIONAL PROTEIN"/>
    <property type="match status" value="1"/>
</dbReference>
<dbReference type="PANTHER" id="PTHR21256">
    <property type="entry name" value="HISTIDINOL DEHYDROGENASE HDH"/>
    <property type="match status" value="1"/>
</dbReference>
<dbReference type="Pfam" id="PF00815">
    <property type="entry name" value="Histidinol_dh"/>
    <property type="match status" value="1"/>
</dbReference>
<dbReference type="PIRSF" id="PIRSF000099">
    <property type="entry name" value="Histidinol_dh"/>
    <property type="match status" value="1"/>
</dbReference>
<dbReference type="PRINTS" id="PR00083">
    <property type="entry name" value="HOLDHDRGNASE"/>
</dbReference>
<dbReference type="SUPFAM" id="SSF53720">
    <property type="entry name" value="ALDH-like"/>
    <property type="match status" value="1"/>
</dbReference>
<dbReference type="PROSITE" id="PS00611">
    <property type="entry name" value="HISOL_DEHYDROGENASE"/>
    <property type="match status" value="1"/>
</dbReference>
<proteinExistence type="inferred from homology"/>